<dbReference type="EC" id="4.1.1.65" evidence="1"/>
<dbReference type="EMBL" id="CP000463">
    <property type="protein sequence ID" value="ABJ05952.1"/>
    <property type="molecule type" value="Genomic_DNA"/>
</dbReference>
<dbReference type="STRING" id="316055.RPE_2008"/>
<dbReference type="KEGG" id="rpe:RPE_2008"/>
<dbReference type="eggNOG" id="COG0688">
    <property type="taxonomic scope" value="Bacteria"/>
</dbReference>
<dbReference type="HOGENOM" id="CLU_072492_0_0_5"/>
<dbReference type="OrthoDB" id="9790893at2"/>
<dbReference type="UniPathway" id="UPA00558">
    <property type="reaction ID" value="UER00616"/>
</dbReference>
<dbReference type="GO" id="GO:0005886">
    <property type="term" value="C:plasma membrane"/>
    <property type="evidence" value="ECO:0007669"/>
    <property type="project" value="UniProtKB-SubCell"/>
</dbReference>
<dbReference type="GO" id="GO:0004609">
    <property type="term" value="F:phosphatidylserine decarboxylase activity"/>
    <property type="evidence" value="ECO:0007669"/>
    <property type="project" value="UniProtKB-UniRule"/>
</dbReference>
<dbReference type="GO" id="GO:0006646">
    <property type="term" value="P:phosphatidylethanolamine biosynthetic process"/>
    <property type="evidence" value="ECO:0007669"/>
    <property type="project" value="UniProtKB-UniRule"/>
</dbReference>
<dbReference type="HAMAP" id="MF_00664">
    <property type="entry name" value="PS_decarb_PSD_A"/>
    <property type="match status" value="1"/>
</dbReference>
<dbReference type="InterPro" id="IPR003817">
    <property type="entry name" value="PS_Dcarbxylase"/>
</dbReference>
<dbReference type="InterPro" id="IPR033175">
    <property type="entry name" value="PSD-A"/>
</dbReference>
<dbReference type="NCBIfam" id="NF003677">
    <property type="entry name" value="PRK05305.1-1"/>
    <property type="match status" value="1"/>
</dbReference>
<dbReference type="NCBIfam" id="NF003678">
    <property type="entry name" value="PRK05305.1-2"/>
    <property type="match status" value="1"/>
</dbReference>
<dbReference type="NCBIfam" id="NF003679">
    <property type="entry name" value="PRK05305.1-3"/>
    <property type="match status" value="1"/>
</dbReference>
<dbReference type="NCBIfam" id="NF003685">
    <property type="entry name" value="PRK05305.2-5"/>
    <property type="match status" value="1"/>
</dbReference>
<dbReference type="PANTHER" id="PTHR35809">
    <property type="entry name" value="ARCHAETIDYLSERINE DECARBOXYLASE PROENZYME-RELATED"/>
    <property type="match status" value="1"/>
</dbReference>
<dbReference type="PANTHER" id="PTHR35809:SF1">
    <property type="entry name" value="ARCHAETIDYLSERINE DECARBOXYLASE PROENZYME-RELATED"/>
    <property type="match status" value="1"/>
</dbReference>
<dbReference type="Pfam" id="PF02666">
    <property type="entry name" value="PS_Dcarbxylase"/>
    <property type="match status" value="1"/>
</dbReference>
<keyword id="KW-1003">Cell membrane</keyword>
<keyword id="KW-0210">Decarboxylase</keyword>
<keyword id="KW-0444">Lipid biosynthesis</keyword>
<keyword id="KW-0443">Lipid metabolism</keyword>
<keyword id="KW-0456">Lyase</keyword>
<keyword id="KW-0472">Membrane</keyword>
<keyword id="KW-0594">Phospholipid biosynthesis</keyword>
<keyword id="KW-1208">Phospholipid metabolism</keyword>
<keyword id="KW-0670">Pyruvate</keyword>
<keyword id="KW-0865">Zymogen</keyword>
<evidence type="ECO:0000255" key="1">
    <source>
        <dbReference type="HAMAP-Rule" id="MF_00664"/>
    </source>
</evidence>
<gene>
    <name evidence="1" type="primary">psd</name>
    <name type="ordered locus">RPE_2008</name>
</gene>
<name>PSD_RHOP5</name>
<sequence length="232" mass="25231">MSIVNSIRAQIPPVHPEGYPFIGGFALVTLLFFWLWSPLGWIALVLTIWCALFFRNPVRVTPVRDDLVVSPADGRISMVTPVVPPAELGLGDKPLLRISIFMSVFNCHVNRAPVGGRIEKIVYTPGKFINAELDKASEDNERNAMVISTPSGQIGVVQIAGLIARRIVSFVRVGQTLATGERFGLIRFGSRLDVFLPEGSKALVSVGQTAIAGETVLADFRQGDGGRTYRAD</sequence>
<protein>
    <recommendedName>
        <fullName evidence="1">Phosphatidylserine decarboxylase proenzyme</fullName>
        <ecNumber evidence="1">4.1.1.65</ecNumber>
    </recommendedName>
    <component>
        <recommendedName>
            <fullName evidence="1">Phosphatidylserine decarboxylase alpha chain</fullName>
        </recommendedName>
    </component>
    <component>
        <recommendedName>
            <fullName evidence="1">Phosphatidylserine decarboxylase beta chain</fullName>
        </recommendedName>
    </component>
</protein>
<proteinExistence type="inferred from homology"/>
<accession>Q07Q32</accession>
<organism>
    <name type="scientific">Rhodopseudomonas palustris (strain BisA53)</name>
    <dbReference type="NCBI Taxonomy" id="316055"/>
    <lineage>
        <taxon>Bacteria</taxon>
        <taxon>Pseudomonadati</taxon>
        <taxon>Pseudomonadota</taxon>
        <taxon>Alphaproteobacteria</taxon>
        <taxon>Hyphomicrobiales</taxon>
        <taxon>Nitrobacteraceae</taxon>
        <taxon>Rhodopseudomonas</taxon>
    </lineage>
</organism>
<reference key="1">
    <citation type="submission" date="2006-09" db="EMBL/GenBank/DDBJ databases">
        <title>Complete sequence of Rhodopseudomonas palustris BisA53.</title>
        <authorList>
            <consortium name="US DOE Joint Genome Institute"/>
            <person name="Copeland A."/>
            <person name="Lucas S."/>
            <person name="Lapidus A."/>
            <person name="Barry K."/>
            <person name="Detter J.C."/>
            <person name="Glavina del Rio T."/>
            <person name="Hammon N."/>
            <person name="Israni S."/>
            <person name="Dalin E."/>
            <person name="Tice H."/>
            <person name="Pitluck S."/>
            <person name="Chain P."/>
            <person name="Malfatti S."/>
            <person name="Shin M."/>
            <person name="Vergez L."/>
            <person name="Schmutz J."/>
            <person name="Larimer F."/>
            <person name="Land M."/>
            <person name="Hauser L."/>
            <person name="Pelletier D.A."/>
            <person name="Kyrpides N."/>
            <person name="Kim E."/>
            <person name="Harwood C.S."/>
            <person name="Oda Y."/>
            <person name="Richardson P."/>
        </authorList>
    </citation>
    <scope>NUCLEOTIDE SEQUENCE [LARGE SCALE GENOMIC DNA]</scope>
    <source>
        <strain>BisA53</strain>
    </source>
</reference>
<comment type="function">
    <text evidence="1">Catalyzes the formation of phosphatidylethanolamine (PtdEtn) from phosphatidylserine (PtdSer).</text>
</comment>
<comment type="catalytic activity">
    <reaction evidence="1">
        <text>a 1,2-diacyl-sn-glycero-3-phospho-L-serine + H(+) = a 1,2-diacyl-sn-glycero-3-phosphoethanolamine + CO2</text>
        <dbReference type="Rhea" id="RHEA:20828"/>
        <dbReference type="ChEBI" id="CHEBI:15378"/>
        <dbReference type="ChEBI" id="CHEBI:16526"/>
        <dbReference type="ChEBI" id="CHEBI:57262"/>
        <dbReference type="ChEBI" id="CHEBI:64612"/>
        <dbReference type="EC" id="4.1.1.65"/>
    </reaction>
</comment>
<comment type="cofactor">
    <cofactor evidence="1">
        <name>pyruvate</name>
        <dbReference type="ChEBI" id="CHEBI:15361"/>
    </cofactor>
    <text evidence="1">Binds 1 pyruvoyl group covalently per subunit.</text>
</comment>
<comment type="pathway">
    <text evidence="1">Phospholipid metabolism; phosphatidylethanolamine biosynthesis; phosphatidylethanolamine from CDP-diacylglycerol: step 2/2.</text>
</comment>
<comment type="subunit">
    <text evidence="1">Heterodimer of a large membrane-associated beta subunit and a small pyruvoyl-containing alpha subunit.</text>
</comment>
<comment type="subcellular location">
    <subcellularLocation>
        <location evidence="1">Cell membrane</location>
        <topology evidence="1">Peripheral membrane protein</topology>
    </subcellularLocation>
</comment>
<comment type="PTM">
    <text evidence="1">Is synthesized initially as an inactive proenzyme. Formation of the active enzyme involves a self-maturation process in which the active site pyruvoyl group is generated from an internal serine residue via an autocatalytic post-translational modification. Two non-identical subunits are generated from the proenzyme in this reaction, and the pyruvate is formed at the N-terminus of the alpha chain, which is derived from the carboxyl end of the proenzyme. The post-translation cleavage follows an unusual pathway, termed non-hydrolytic serinolysis, in which the side chain hydroxyl group of the serine supplies its oxygen atom to form the C-terminus of the beta chain, while the remainder of the serine residue undergoes an oxidative deamination to produce ammonia and the pyruvoyl prosthetic group on the alpha chain.</text>
</comment>
<comment type="similarity">
    <text evidence="1">Belongs to the phosphatidylserine decarboxylase family. PSD-A subfamily.</text>
</comment>
<feature type="chain" id="PRO_1000026678" description="Phosphatidylserine decarboxylase beta chain" evidence="1">
    <location>
        <begin position="1"/>
        <end position="189"/>
    </location>
</feature>
<feature type="chain" id="PRO_1000026679" description="Phosphatidylserine decarboxylase alpha chain" evidence="1">
    <location>
        <begin position="190"/>
        <end position="232"/>
    </location>
</feature>
<feature type="active site" description="Schiff-base intermediate with substrate; via pyruvic acid" evidence="1">
    <location>
        <position position="190"/>
    </location>
</feature>
<feature type="site" description="Cleavage (non-hydrolytic); by autocatalysis" evidence="1">
    <location>
        <begin position="189"/>
        <end position="190"/>
    </location>
</feature>
<feature type="modified residue" description="Pyruvic acid (Ser); by autocatalysis" evidence="1">
    <location>
        <position position="190"/>
    </location>
</feature>